<dbReference type="EMBL" id="BA000011">
    <property type="protein sequence ID" value="BAB60301.1"/>
    <property type="molecule type" value="Genomic_DNA"/>
</dbReference>
<dbReference type="RefSeq" id="WP_010917393.1">
    <property type="nucleotide sequence ID" value="NC_002689.2"/>
</dbReference>
<dbReference type="SMR" id="Q979K2"/>
<dbReference type="STRING" id="273116.gene:9381959"/>
<dbReference type="PaxDb" id="273116-14325397"/>
<dbReference type="GeneID" id="1441275"/>
<dbReference type="KEGG" id="tvo:TVG1187479"/>
<dbReference type="eggNOG" id="arCOG04242">
    <property type="taxonomic scope" value="Archaea"/>
</dbReference>
<dbReference type="HOGENOM" id="CLU_076922_1_0_2"/>
<dbReference type="OrthoDB" id="7668at2157"/>
<dbReference type="PhylomeDB" id="Q979K2"/>
<dbReference type="Proteomes" id="UP000001017">
    <property type="component" value="Chromosome"/>
</dbReference>
<dbReference type="GO" id="GO:0022625">
    <property type="term" value="C:cytosolic large ribosomal subunit"/>
    <property type="evidence" value="ECO:0007669"/>
    <property type="project" value="TreeGrafter"/>
</dbReference>
<dbReference type="GO" id="GO:0003729">
    <property type="term" value="F:mRNA binding"/>
    <property type="evidence" value="ECO:0007669"/>
    <property type="project" value="TreeGrafter"/>
</dbReference>
<dbReference type="GO" id="GO:0003735">
    <property type="term" value="F:structural constituent of ribosome"/>
    <property type="evidence" value="ECO:0007669"/>
    <property type="project" value="InterPro"/>
</dbReference>
<dbReference type="GO" id="GO:0017148">
    <property type="term" value="P:negative regulation of translation"/>
    <property type="evidence" value="ECO:0007669"/>
    <property type="project" value="TreeGrafter"/>
</dbReference>
<dbReference type="GO" id="GO:0006412">
    <property type="term" value="P:translation"/>
    <property type="evidence" value="ECO:0007669"/>
    <property type="project" value="UniProtKB-UniRule"/>
</dbReference>
<dbReference type="CDD" id="cd00392">
    <property type="entry name" value="Ribosomal_L13"/>
    <property type="match status" value="1"/>
</dbReference>
<dbReference type="Gene3D" id="3.90.1180.10">
    <property type="entry name" value="Ribosomal protein L13"/>
    <property type="match status" value="1"/>
</dbReference>
<dbReference type="HAMAP" id="MF_01366">
    <property type="entry name" value="Ribosomal_uL13"/>
    <property type="match status" value="1"/>
</dbReference>
<dbReference type="InterPro" id="IPR005822">
    <property type="entry name" value="Ribosomal_uL13"/>
</dbReference>
<dbReference type="InterPro" id="IPR005823">
    <property type="entry name" value="Ribosomal_uL13_bac-type"/>
</dbReference>
<dbReference type="InterPro" id="IPR005755">
    <property type="entry name" value="Ribosomal_uL13_euk/arc"/>
</dbReference>
<dbReference type="InterPro" id="IPR036899">
    <property type="entry name" value="Ribosomal_uL13_sf"/>
</dbReference>
<dbReference type="NCBIfam" id="TIGR01077">
    <property type="entry name" value="L13_A_E"/>
    <property type="match status" value="1"/>
</dbReference>
<dbReference type="NCBIfam" id="NF005004">
    <property type="entry name" value="PRK06394.1"/>
    <property type="match status" value="1"/>
</dbReference>
<dbReference type="PANTHER" id="PTHR11545:SF3">
    <property type="entry name" value="LARGE RIBOSOMAL SUBUNIT PROTEIN UL13"/>
    <property type="match status" value="1"/>
</dbReference>
<dbReference type="PANTHER" id="PTHR11545">
    <property type="entry name" value="RIBOSOMAL PROTEIN L13"/>
    <property type="match status" value="1"/>
</dbReference>
<dbReference type="Pfam" id="PF00572">
    <property type="entry name" value="Ribosomal_L13"/>
    <property type="match status" value="1"/>
</dbReference>
<dbReference type="PIRSF" id="PIRSF002181">
    <property type="entry name" value="Ribosomal_L13"/>
    <property type="match status" value="1"/>
</dbReference>
<dbReference type="SUPFAM" id="SSF52161">
    <property type="entry name" value="Ribosomal protein L13"/>
    <property type="match status" value="1"/>
</dbReference>
<feature type="chain" id="PRO_0000261853" description="Large ribosomal subunit protein uL13">
    <location>
        <begin position="1"/>
        <end position="136"/>
    </location>
</feature>
<keyword id="KW-0687">Ribonucleoprotein</keyword>
<keyword id="KW-0689">Ribosomal protein</keyword>
<name>RL13_THEVO</name>
<organism>
    <name type="scientific">Thermoplasma volcanium (strain ATCC 51530 / DSM 4299 / JCM 9571 / NBRC 15438 / GSS1)</name>
    <dbReference type="NCBI Taxonomy" id="273116"/>
    <lineage>
        <taxon>Archaea</taxon>
        <taxon>Methanobacteriati</taxon>
        <taxon>Thermoplasmatota</taxon>
        <taxon>Thermoplasmata</taxon>
        <taxon>Thermoplasmatales</taxon>
        <taxon>Thermoplasmataceae</taxon>
        <taxon>Thermoplasma</taxon>
    </lineage>
</organism>
<gene>
    <name evidence="1" type="primary">rpl13</name>
    <name type="ordered locus">TV1159</name>
    <name type="ORF">TVG1187479</name>
</gene>
<protein>
    <recommendedName>
        <fullName evidence="1">Large ribosomal subunit protein uL13</fullName>
    </recommendedName>
    <alternativeName>
        <fullName evidence="2">50S ribosomal protein L13</fullName>
    </alternativeName>
</protein>
<evidence type="ECO:0000255" key="1">
    <source>
        <dbReference type="HAMAP-Rule" id="MF_01366"/>
    </source>
</evidence>
<evidence type="ECO:0000305" key="2"/>
<comment type="function">
    <text evidence="1">This protein is one of the early assembly proteins of the 50S ribosomal subunit, although it is not seen to bind rRNA by itself. It is important during the early stages of 50S assembly.</text>
</comment>
<comment type="subunit">
    <text evidence="1">Part of the 50S ribosomal subunit.</text>
</comment>
<comment type="similarity">
    <text evidence="1">Belongs to the universal ribosomal protein uL13 family.</text>
</comment>
<sequence length="136" mass="15242">MKIIDASNTVYGRLSAYVAKQLLNGEEVVIVNASKAVITGDRKFIIDKFKQRLDIGSVRKGPYYPKTPENILRRSIGDMLPKKITRGKEALSRCKVYRNLPKNVSSEKIEKVDDVMTDKVVGIITLEELSKELGGM</sequence>
<accession>Q979K2</accession>
<proteinExistence type="inferred from homology"/>
<reference key="1">
    <citation type="journal article" date="2000" name="Proc. Natl. Acad. Sci. U.S.A.">
        <title>Archaeal adaptation to higher temperatures revealed by genomic sequence of Thermoplasma volcanium.</title>
        <authorList>
            <person name="Kawashima T."/>
            <person name="Amano N."/>
            <person name="Koike H."/>
            <person name="Makino S."/>
            <person name="Higuchi S."/>
            <person name="Kawashima-Ohya Y."/>
            <person name="Watanabe K."/>
            <person name="Yamazaki M."/>
            <person name="Kanehori K."/>
            <person name="Kawamoto T."/>
            <person name="Nunoshiba T."/>
            <person name="Yamamoto Y."/>
            <person name="Aramaki H."/>
            <person name="Makino K."/>
            <person name="Suzuki M."/>
        </authorList>
    </citation>
    <scope>NUCLEOTIDE SEQUENCE [LARGE SCALE GENOMIC DNA]</scope>
    <source>
        <strain>ATCC 51530 / DSM 4299 / JCM 9571 / NBRC 15438 / GSS1</strain>
    </source>
</reference>